<evidence type="ECO:0000250" key="1">
    <source>
        <dbReference type="UniProtKB" id="Q92575"/>
    </source>
</evidence>
<evidence type="ECO:0000255" key="2"/>
<evidence type="ECO:0000255" key="3">
    <source>
        <dbReference type="PROSITE-ProRule" id="PRU00215"/>
    </source>
</evidence>
<evidence type="ECO:0000256" key="4">
    <source>
        <dbReference type="SAM" id="MobiDB-lite"/>
    </source>
</evidence>
<evidence type="ECO:0000269" key="5">
    <source>
    </source>
</evidence>
<evidence type="ECO:0000305" key="6"/>
<evidence type="ECO:0007744" key="7">
    <source>
    </source>
</evidence>
<evidence type="ECO:0007829" key="8">
    <source>
        <dbReference type="PDB" id="2DZK"/>
    </source>
</evidence>
<dbReference type="EMBL" id="AK075716">
    <property type="protein sequence ID" value="BAC35906.1"/>
    <property type="molecule type" value="mRNA"/>
</dbReference>
<dbReference type="EMBL" id="AK147795">
    <property type="protein sequence ID" value="BAE28143.1"/>
    <property type="molecule type" value="mRNA"/>
</dbReference>
<dbReference type="EMBL" id="BC019795">
    <property type="protein sequence ID" value="AAH19795.1"/>
    <property type="molecule type" value="mRNA"/>
</dbReference>
<dbReference type="CCDS" id="CCDS15251.1"/>
<dbReference type="RefSeq" id="NP_080666.2">
    <property type="nucleotide sequence ID" value="NM_026390.2"/>
</dbReference>
<dbReference type="PDB" id="2DZK">
    <property type="method" value="NMR"/>
    <property type="chains" value="A=312-409"/>
</dbReference>
<dbReference type="PDBsum" id="2DZK"/>
<dbReference type="SMR" id="Q8VCH8"/>
<dbReference type="BioGRID" id="212456">
    <property type="interactions" value="9"/>
</dbReference>
<dbReference type="FunCoup" id="Q8VCH8">
    <property type="interactions" value="3348"/>
</dbReference>
<dbReference type="STRING" id="10090.ENSMUSP00000027592"/>
<dbReference type="GlyGen" id="Q8VCH8">
    <property type="glycosylation" value="2 sites, 1 O-linked glycan (1 site)"/>
</dbReference>
<dbReference type="iPTMnet" id="Q8VCH8"/>
<dbReference type="PhosphoSitePlus" id="Q8VCH8"/>
<dbReference type="SwissPalm" id="Q8VCH8"/>
<dbReference type="jPOST" id="Q8VCH8"/>
<dbReference type="PaxDb" id="10090-ENSMUSP00000027592"/>
<dbReference type="PeptideAtlas" id="Q8VCH8"/>
<dbReference type="ProteomicsDB" id="298379"/>
<dbReference type="Pumba" id="Q8VCH8"/>
<dbReference type="GeneID" id="67812"/>
<dbReference type="KEGG" id="mmu:67812"/>
<dbReference type="UCSC" id="uc007cll.1">
    <property type="organism name" value="mouse"/>
</dbReference>
<dbReference type="AGR" id="MGI:1915062"/>
<dbReference type="CTD" id="23190"/>
<dbReference type="MGI" id="MGI:1915062">
    <property type="gene designation" value="Ubxn4"/>
</dbReference>
<dbReference type="eggNOG" id="KOG2507">
    <property type="taxonomic scope" value="Eukaryota"/>
</dbReference>
<dbReference type="InParanoid" id="Q8VCH8"/>
<dbReference type="OrthoDB" id="2445133at2759"/>
<dbReference type="PhylomeDB" id="Q8VCH8"/>
<dbReference type="TreeFam" id="TF317466"/>
<dbReference type="BioGRID-ORCS" id="67812">
    <property type="hits" value="2 hits in 78 CRISPR screens"/>
</dbReference>
<dbReference type="ChiTaRS" id="Ubxn4">
    <property type="organism name" value="mouse"/>
</dbReference>
<dbReference type="EvolutionaryTrace" id="Q8VCH8"/>
<dbReference type="PRO" id="PR:Q8VCH8"/>
<dbReference type="Proteomes" id="UP000000589">
    <property type="component" value="Unplaced"/>
</dbReference>
<dbReference type="RNAct" id="Q8VCH8">
    <property type="molecule type" value="protein"/>
</dbReference>
<dbReference type="GO" id="GO:0005789">
    <property type="term" value="C:endoplasmic reticulum membrane"/>
    <property type="evidence" value="ECO:0007669"/>
    <property type="project" value="UniProtKB-SubCell"/>
</dbReference>
<dbReference type="GO" id="GO:0005635">
    <property type="term" value="C:nuclear envelope"/>
    <property type="evidence" value="ECO:0007669"/>
    <property type="project" value="UniProtKB-SubCell"/>
</dbReference>
<dbReference type="GO" id="GO:0036503">
    <property type="term" value="P:ERAD pathway"/>
    <property type="evidence" value="ECO:0000250"/>
    <property type="project" value="UniProtKB"/>
</dbReference>
<dbReference type="GO" id="GO:0006986">
    <property type="term" value="P:response to unfolded protein"/>
    <property type="evidence" value="ECO:0007669"/>
    <property type="project" value="UniProtKB-KW"/>
</dbReference>
<dbReference type="CDD" id="cd16117">
    <property type="entry name" value="UBX_UBXN4"/>
    <property type="match status" value="1"/>
</dbReference>
<dbReference type="FunFam" id="3.10.20.90:FF:000196">
    <property type="entry name" value="UBX domain-containing protein 4"/>
    <property type="match status" value="1"/>
</dbReference>
<dbReference type="Gene3D" id="3.40.30.10">
    <property type="entry name" value="Glutaredoxin"/>
    <property type="match status" value="1"/>
</dbReference>
<dbReference type="Gene3D" id="3.10.20.90">
    <property type="entry name" value="Phosphatidylinositol 3-kinase Catalytic Subunit, Chain A, domain 1"/>
    <property type="match status" value="1"/>
</dbReference>
<dbReference type="InterPro" id="IPR036249">
    <property type="entry name" value="Thioredoxin-like_sf"/>
</dbReference>
<dbReference type="InterPro" id="IPR029071">
    <property type="entry name" value="Ubiquitin-like_domsf"/>
</dbReference>
<dbReference type="InterPro" id="IPR001012">
    <property type="entry name" value="UBX_dom"/>
</dbReference>
<dbReference type="PANTHER" id="PTHR46424">
    <property type="entry name" value="UBX DOMAIN-CONTAINING PROTEIN 4"/>
    <property type="match status" value="1"/>
</dbReference>
<dbReference type="PANTHER" id="PTHR46424:SF1">
    <property type="entry name" value="UBX DOMAIN-CONTAINING PROTEIN 4"/>
    <property type="match status" value="1"/>
</dbReference>
<dbReference type="Pfam" id="PF00789">
    <property type="entry name" value="UBX"/>
    <property type="match status" value="1"/>
</dbReference>
<dbReference type="Pfam" id="PF23187">
    <property type="entry name" value="UBX7_N"/>
    <property type="match status" value="1"/>
</dbReference>
<dbReference type="SMART" id="SM00166">
    <property type="entry name" value="UBX"/>
    <property type="match status" value="1"/>
</dbReference>
<dbReference type="SUPFAM" id="SSF52833">
    <property type="entry name" value="Thioredoxin-like"/>
    <property type="match status" value="1"/>
</dbReference>
<dbReference type="SUPFAM" id="SSF54236">
    <property type="entry name" value="Ubiquitin-like"/>
    <property type="match status" value="1"/>
</dbReference>
<dbReference type="PROSITE" id="PS50033">
    <property type="entry name" value="UBX"/>
    <property type="match status" value="1"/>
</dbReference>
<proteinExistence type="evidence at protein level"/>
<gene>
    <name type="primary">Ubxn4</name>
    <name type="synonym">Ubxd2</name>
    <name type="synonym">Ubxdc1</name>
</gene>
<protein>
    <recommendedName>
        <fullName>UBX domain-containing protein 4</fullName>
    </recommendedName>
    <alternativeName>
        <fullName>Erasin</fullName>
    </alternativeName>
    <alternativeName>
        <fullName>UBX domain-containing protein 2</fullName>
    </alternativeName>
</protein>
<accession>Q8VCH8</accession>
<accession>Q3UGR4</accession>
<accession>Q8BW17</accession>
<comment type="function">
    <text evidence="1">Involved in endoplasmic reticulum-associated protein degradation (ERAD). Acts as a platform to recruit both UBQLN1 and VCP to the ER during ERAD.</text>
</comment>
<comment type="subunit">
    <text evidence="1">Directly interacts with VCP. Interacts with UBQLN1. Forms a complex with VCP and UBQLN1.</text>
</comment>
<comment type="subcellular location">
    <subcellularLocation>
        <location evidence="1">Endoplasmic reticulum membrane</location>
        <topology evidence="1">Peripheral membrane protein</topology>
    </subcellularLocation>
    <subcellularLocation>
        <location evidence="1">Nucleus envelope</location>
    </subcellularLocation>
    <text evidence="1">Both the N- and the C-terminus face the cytosol. Also found in the nucleus envelope contiguous to the ER.</text>
</comment>
<comment type="tissue specificity">
    <text evidence="5">Expressed in many tissues, including brain, heart, kidney, liver, muscle and spleen (at protein level).</text>
</comment>
<comment type="domain">
    <text evidence="1">The UBX domain is required for interaction with VCP.</text>
</comment>
<comment type="domain">
    <text evidence="1">The intramembrane domain also contains the signal for ER targeting.</text>
</comment>
<feature type="chain" id="PRO_0000211028" description="UBX domain-containing protein 4">
    <location>
        <begin position="1"/>
        <end position="506"/>
    </location>
</feature>
<feature type="topological domain" description="Cytoplasmic" evidence="2">
    <location>
        <begin position="1"/>
        <end position="411"/>
    </location>
</feature>
<feature type="intramembrane region" evidence="2">
    <location>
        <begin position="412"/>
        <end position="432"/>
    </location>
</feature>
<feature type="topological domain" description="Cytoplasmic" evidence="2">
    <location>
        <begin position="433"/>
        <end position="506"/>
    </location>
</feature>
<feature type="domain" description="UBX" evidence="3">
    <location>
        <begin position="313"/>
        <end position="391"/>
    </location>
</feature>
<feature type="region of interest" description="Interaction with UBQLN1" evidence="1">
    <location>
        <begin position="1"/>
        <end position="199"/>
    </location>
</feature>
<feature type="region of interest" description="Disordered" evidence="4">
    <location>
        <begin position="110"/>
        <end position="194"/>
    </location>
</feature>
<feature type="region of interest" description="Disordered" evidence="4">
    <location>
        <begin position="437"/>
        <end position="506"/>
    </location>
</feature>
<feature type="compositionally biased region" description="Polar residues" evidence="4">
    <location>
        <begin position="120"/>
        <end position="136"/>
    </location>
</feature>
<feature type="compositionally biased region" description="Polar residues" evidence="4">
    <location>
        <begin position="153"/>
        <end position="167"/>
    </location>
</feature>
<feature type="compositionally biased region" description="Low complexity" evidence="4">
    <location>
        <begin position="444"/>
        <end position="456"/>
    </location>
</feature>
<feature type="compositionally biased region" description="Basic and acidic residues" evidence="4">
    <location>
        <begin position="457"/>
        <end position="489"/>
    </location>
</feature>
<feature type="compositionally biased region" description="Polar residues" evidence="4">
    <location>
        <begin position="496"/>
        <end position="506"/>
    </location>
</feature>
<feature type="modified residue" description="Phosphothreonine" evidence="7">
    <location>
        <position position="487"/>
    </location>
</feature>
<feature type="sequence conflict" description="In Ref. 1; BAC35906." evidence="6" ref="1">
    <original>C</original>
    <variation>R</variation>
    <location>
        <position position="65"/>
    </location>
</feature>
<feature type="sequence conflict" description="In Ref. 1; BAE28143." evidence="6" ref="1">
    <original>I</original>
    <variation>T</variation>
    <location>
        <position position="162"/>
    </location>
</feature>
<feature type="strand" evidence="8">
    <location>
        <begin position="318"/>
        <end position="323"/>
    </location>
</feature>
<feature type="strand" evidence="8">
    <location>
        <begin position="325"/>
        <end position="327"/>
    </location>
</feature>
<feature type="strand" evidence="8">
    <location>
        <begin position="329"/>
        <end position="334"/>
    </location>
</feature>
<feature type="helix" evidence="8">
    <location>
        <begin position="340"/>
        <end position="351"/>
    </location>
</feature>
<feature type="strand" evidence="8">
    <location>
        <begin position="359"/>
        <end position="361"/>
    </location>
</feature>
<feature type="strand" evidence="8">
    <location>
        <begin position="363"/>
        <end position="365"/>
    </location>
</feature>
<feature type="turn" evidence="8">
    <location>
        <begin position="371"/>
        <end position="375"/>
    </location>
</feature>
<feature type="helix" evidence="8">
    <location>
        <begin position="379"/>
        <end position="381"/>
    </location>
</feature>
<feature type="strand" evidence="8">
    <location>
        <begin position="384"/>
        <end position="392"/>
    </location>
</feature>
<keyword id="KW-0002">3D-structure</keyword>
<keyword id="KW-0256">Endoplasmic reticulum</keyword>
<keyword id="KW-0472">Membrane</keyword>
<keyword id="KW-0539">Nucleus</keyword>
<keyword id="KW-0597">Phosphoprotein</keyword>
<keyword id="KW-1185">Reference proteome</keyword>
<keyword id="KW-0834">Unfolded protein response</keyword>
<reference key="1">
    <citation type="journal article" date="2005" name="Science">
        <title>The transcriptional landscape of the mammalian genome.</title>
        <authorList>
            <person name="Carninci P."/>
            <person name="Kasukawa T."/>
            <person name="Katayama S."/>
            <person name="Gough J."/>
            <person name="Frith M.C."/>
            <person name="Maeda N."/>
            <person name="Oyama R."/>
            <person name="Ravasi T."/>
            <person name="Lenhard B."/>
            <person name="Wells C."/>
            <person name="Kodzius R."/>
            <person name="Shimokawa K."/>
            <person name="Bajic V.B."/>
            <person name="Brenner S.E."/>
            <person name="Batalov S."/>
            <person name="Forrest A.R."/>
            <person name="Zavolan M."/>
            <person name="Davis M.J."/>
            <person name="Wilming L.G."/>
            <person name="Aidinis V."/>
            <person name="Allen J.E."/>
            <person name="Ambesi-Impiombato A."/>
            <person name="Apweiler R."/>
            <person name="Aturaliya R.N."/>
            <person name="Bailey T.L."/>
            <person name="Bansal M."/>
            <person name="Baxter L."/>
            <person name="Beisel K.W."/>
            <person name="Bersano T."/>
            <person name="Bono H."/>
            <person name="Chalk A.M."/>
            <person name="Chiu K.P."/>
            <person name="Choudhary V."/>
            <person name="Christoffels A."/>
            <person name="Clutterbuck D.R."/>
            <person name="Crowe M.L."/>
            <person name="Dalla E."/>
            <person name="Dalrymple B.P."/>
            <person name="de Bono B."/>
            <person name="Della Gatta G."/>
            <person name="di Bernardo D."/>
            <person name="Down T."/>
            <person name="Engstrom P."/>
            <person name="Fagiolini M."/>
            <person name="Faulkner G."/>
            <person name="Fletcher C.F."/>
            <person name="Fukushima T."/>
            <person name="Furuno M."/>
            <person name="Futaki S."/>
            <person name="Gariboldi M."/>
            <person name="Georgii-Hemming P."/>
            <person name="Gingeras T.R."/>
            <person name="Gojobori T."/>
            <person name="Green R.E."/>
            <person name="Gustincich S."/>
            <person name="Harbers M."/>
            <person name="Hayashi Y."/>
            <person name="Hensch T.K."/>
            <person name="Hirokawa N."/>
            <person name="Hill D."/>
            <person name="Huminiecki L."/>
            <person name="Iacono M."/>
            <person name="Ikeo K."/>
            <person name="Iwama A."/>
            <person name="Ishikawa T."/>
            <person name="Jakt M."/>
            <person name="Kanapin A."/>
            <person name="Katoh M."/>
            <person name="Kawasawa Y."/>
            <person name="Kelso J."/>
            <person name="Kitamura H."/>
            <person name="Kitano H."/>
            <person name="Kollias G."/>
            <person name="Krishnan S.P."/>
            <person name="Kruger A."/>
            <person name="Kummerfeld S.K."/>
            <person name="Kurochkin I.V."/>
            <person name="Lareau L.F."/>
            <person name="Lazarevic D."/>
            <person name="Lipovich L."/>
            <person name="Liu J."/>
            <person name="Liuni S."/>
            <person name="McWilliam S."/>
            <person name="Madan Babu M."/>
            <person name="Madera M."/>
            <person name="Marchionni L."/>
            <person name="Matsuda H."/>
            <person name="Matsuzawa S."/>
            <person name="Miki H."/>
            <person name="Mignone F."/>
            <person name="Miyake S."/>
            <person name="Morris K."/>
            <person name="Mottagui-Tabar S."/>
            <person name="Mulder N."/>
            <person name="Nakano N."/>
            <person name="Nakauchi H."/>
            <person name="Ng P."/>
            <person name="Nilsson R."/>
            <person name="Nishiguchi S."/>
            <person name="Nishikawa S."/>
            <person name="Nori F."/>
            <person name="Ohara O."/>
            <person name="Okazaki Y."/>
            <person name="Orlando V."/>
            <person name="Pang K.C."/>
            <person name="Pavan W.J."/>
            <person name="Pavesi G."/>
            <person name="Pesole G."/>
            <person name="Petrovsky N."/>
            <person name="Piazza S."/>
            <person name="Reed J."/>
            <person name="Reid J.F."/>
            <person name="Ring B.Z."/>
            <person name="Ringwald M."/>
            <person name="Rost B."/>
            <person name="Ruan Y."/>
            <person name="Salzberg S.L."/>
            <person name="Sandelin A."/>
            <person name="Schneider C."/>
            <person name="Schoenbach C."/>
            <person name="Sekiguchi K."/>
            <person name="Semple C.A."/>
            <person name="Seno S."/>
            <person name="Sessa L."/>
            <person name="Sheng Y."/>
            <person name="Shibata Y."/>
            <person name="Shimada H."/>
            <person name="Shimada K."/>
            <person name="Silva D."/>
            <person name="Sinclair B."/>
            <person name="Sperling S."/>
            <person name="Stupka E."/>
            <person name="Sugiura K."/>
            <person name="Sultana R."/>
            <person name="Takenaka Y."/>
            <person name="Taki K."/>
            <person name="Tammoja K."/>
            <person name="Tan S.L."/>
            <person name="Tang S."/>
            <person name="Taylor M.S."/>
            <person name="Tegner J."/>
            <person name="Teichmann S.A."/>
            <person name="Ueda H.R."/>
            <person name="van Nimwegen E."/>
            <person name="Verardo R."/>
            <person name="Wei C.L."/>
            <person name="Yagi K."/>
            <person name="Yamanishi H."/>
            <person name="Zabarovsky E."/>
            <person name="Zhu S."/>
            <person name="Zimmer A."/>
            <person name="Hide W."/>
            <person name="Bult C."/>
            <person name="Grimmond S.M."/>
            <person name="Teasdale R.D."/>
            <person name="Liu E.T."/>
            <person name="Brusic V."/>
            <person name="Quackenbush J."/>
            <person name="Wahlestedt C."/>
            <person name="Mattick J.S."/>
            <person name="Hume D.A."/>
            <person name="Kai C."/>
            <person name="Sasaki D."/>
            <person name="Tomaru Y."/>
            <person name="Fukuda S."/>
            <person name="Kanamori-Katayama M."/>
            <person name="Suzuki M."/>
            <person name="Aoki J."/>
            <person name="Arakawa T."/>
            <person name="Iida J."/>
            <person name="Imamura K."/>
            <person name="Itoh M."/>
            <person name="Kato T."/>
            <person name="Kawaji H."/>
            <person name="Kawagashira N."/>
            <person name="Kawashima T."/>
            <person name="Kojima M."/>
            <person name="Kondo S."/>
            <person name="Konno H."/>
            <person name="Nakano K."/>
            <person name="Ninomiya N."/>
            <person name="Nishio T."/>
            <person name="Okada M."/>
            <person name="Plessy C."/>
            <person name="Shibata K."/>
            <person name="Shiraki T."/>
            <person name="Suzuki S."/>
            <person name="Tagami M."/>
            <person name="Waki K."/>
            <person name="Watahiki A."/>
            <person name="Okamura-Oho Y."/>
            <person name="Suzuki H."/>
            <person name="Kawai J."/>
            <person name="Hayashizaki Y."/>
        </authorList>
    </citation>
    <scope>NUCLEOTIDE SEQUENCE [LARGE SCALE MRNA]</scope>
    <source>
        <strain>C57BL/6J</strain>
        <tissue>Liver</tissue>
        <tissue>Melanocyte</tissue>
    </source>
</reference>
<reference key="2">
    <citation type="journal article" date="2004" name="Genome Res.">
        <title>The status, quality, and expansion of the NIH full-length cDNA project: the Mammalian Gene Collection (MGC).</title>
        <authorList>
            <consortium name="The MGC Project Team"/>
        </authorList>
    </citation>
    <scope>NUCLEOTIDE SEQUENCE [LARGE SCALE MRNA]</scope>
    <source>
        <tissue>Liver</tissue>
    </source>
</reference>
<reference key="3">
    <citation type="journal article" date="2006" name="J. Cell Sci.">
        <title>Characterization of erasin (UBXD2): a new ER protein that promotes ER-associated protein degradation.</title>
        <authorList>
            <person name="Liang J."/>
            <person name="Yin C."/>
            <person name="Doong H."/>
            <person name="Fang S."/>
            <person name="Peterhoff C."/>
            <person name="Nixon R.A."/>
            <person name="Monteiro M.J."/>
        </authorList>
    </citation>
    <scope>TISSUE SPECIFICITY</scope>
</reference>
<reference key="4">
    <citation type="journal article" date="2007" name="Proc. Natl. Acad. Sci. U.S.A.">
        <title>Large-scale phosphorylation analysis of mouse liver.</title>
        <authorList>
            <person name="Villen J."/>
            <person name="Beausoleil S.A."/>
            <person name="Gerber S.A."/>
            <person name="Gygi S.P."/>
        </authorList>
    </citation>
    <scope>PHOSPHORYLATION [LARGE SCALE ANALYSIS] AT THR-487</scope>
    <scope>IDENTIFICATION BY MASS SPECTROMETRY [LARGE SCALE ANALYSIS]</scope>
    <source>
        <tissue>Liver</tissue>
    </source>
</reference>
<reference key="5">
    <citation type="journal article" date="2010" name="Cell">
        <title>A tissue-specific atlas of mouse protein phosphorylation and expression.</title>
        <authorList>
            <person name="Huttlin E.L."/>
            <person name="Jedrychowski M.P."/>
            <person name="Elias J.E."/>
            <person name="Goswami T."/>
            <person name="Rad R."/>
            <person name="Beausoleil S.A."/>
            <person name="Villen J."/>
            <person name="Haas W."/>
            <person name="Sowa M.E."/>
            <person name="Gygi S.P."/>
        </authorList>
    </citation>
    <scope>IDENTIFICATION BY MASS SPECTROMETRY [LARGE SCALE ANALYSIS]</scope>
    <source>
        <tissue>Brain</tissue>
        <tissue>Brown adipose tissue</tissue>
        <tissue>Heart</tissue>
        <tissue>Kidney</tissue>
        <tissue>Liver</tissue>
        <tissue>Lung</tissue>
        <tissue>Pancreas</tissue>
        <tissue>Spleen</tissue>
        <tissue>Testis</tissue>
    </source>
</reference>
<reference key="6">
    <citation type="submission" date="2007-03" db="PDB data bank">
        <title>Structure of the UBX domain in mouse UBX domain-containing protein 2.</title>
        <authorList>
            <consortium name="RIKEN structural genomics initiative (RSGI)"/>
        </authorList>
    </citation>
    <scope>STRUCTURE BY NMR OF 309-409</scope>
</reference>
<organism>
    <name type="scientific">Mus musculus</name>
    <name type="common">Mouse</name>
    <dbReference type="NCBI Taxonomy" id="10090"/>
    <lineage>
        <taxon>Eukaryota</taxon>
        <taxon>Metazoa</taxon>
        <taxon>Chordata</taxon>
        <taxon>Craniata</taxon>
        <taxon>Vertebrata</taxon>
        <taxon>Euteleostomi</taxon>
        <taxon>Mammalia</taxon>
        <taxon>Eutheria</taxon>
        <taxon>Euarchontoglires</taxon>
        <taxon>Glires</taxon>
        <taxon>Rodentia</taxon>
        <taxon>Myomorpha</taxon>
        <taxon>Muroidea</taxon>
        <taxon>Muridae</taxon>
        <taxon>Murinae</taxon>
        <taxon>Mus</taxon>
        <taxon>Mus</taxon>
    </lineage>
</organism>
<sequence>MLWFQGAIPAAIASAKRSGAVFVVFVAGDDEQSIQMAASWEDEKVTQASSNNFVAIKIDTKSEACLQFSQIYPVVCVPSSFFIGDSGIPLEVIAGSVSADELVTRIHKVQQMHSSKGEASVTNDNQSESSVSTPSASFEPDVCENPESKNTELCETPATSDIKSDTATGGECTGHDSHSQEPHGCSNQRPAEDLTVRVERLTKKLEERREEKRKEEAQREIKKEIERRKTGKEMLDYKRKQEEELTKRMLEERSREKAEDRAARERIKQQIALDRAERAARFAKTKEAEAAKAAALLTKQAGTEVKRESTARDRSTIARIQFRLPDGSSFTNQFPSDAPLEEARQFAAQTVGNTYGNFSLATMFPRREFTREDYKRRLLDLELAPSASVVLLPAGRPATSIVHSSSGDIWTLLGTVLYPFLAIWRLISNFLFSNPPPAQTSARATSTEPSNSASSSKSEKREPVRKRMLEKRGEDFKKEGKIYRLRTQDDGEDENNTWNGNSTQQM</sequence>
<name>UBXN4_MOUSE</name>